<keyword id="KW-0068">Autocatalytic cleavage</keyword>
<keyword id="KW-0227">DNA damage</keyword>
<keyword id="KW-0234">DNA repair</keyword>
<keyword id="KW-0235">DNA replication</keyword>
<keyword id="KW-0238">DNA-binding</keyword>
<keyword id="KW-0378">Hydrolase</keyword>
<keyword id="KW-0678">Repressor</keyword>
<keyword id="KW-0742">SOS response</keyword>
<keyword id="KW-0804">Transcription</keyword>
<keyword id="KW-0805">Transcription regulation</keyword>
<reference key="1">
    <citation type="journal article" date="2006" name="Genome Res.">
        <title>Skewed genomic variability in strains of the toxigenic bacterial pathogen, Clostridium perfringens.</title>
        <authorList>
            <person name="Myers G.S.A."/>
            <person name="Rasko D.A."/>
            <person name="Cheung J.K."/>
            <person name="Ravel J."/>
            <person name="Seshadri R."/>
            <person name="DeBoy R.T."/>
            <person name="Ren Q."/>
            <person name="Varga J."/>
            <person name="Awad M.M."/>
            <person name="Brinkac L.M."/>
            <person name="Daugherty S.C."/>
            <person name="Haft D.H."/>
            <person name="Dodson R.J."/>
            <person name="Madupu R."/>
            <person name="Nelson W.C."/>
            <person name="Rosovitz M.J."/>
            <person name="Sullivan S.A."/>
            <person name="Khouri H."/>
            <person name="Dimitrov G.I."/>
            <person name="Watkins K.L."/>
            <person name="Mulligan S."/>
            <person name="Benton J."/>
            <person name="Radune D."/>
            <person name="Fisher D.J."/>
            <person name="Atkins H.S."/>
            <person name="Hiscox T."/>
            <person name="Jost B.H."/>
            <person name="Billington S.J."/>
            <person name="Songer J.G."/>
            <person name="McClane B.A."/>
            <person name="Titball R.W."/>
            <person name="Rood J.I."/>
            <person name="Melville S.B."/>
            <person name="Paulsen I.T."/>
        </authorList>
    </citation>
    <scope>NUCLEOTIDE SEQUENCE [LARGE SCALE GENOMIC DNA]</scope>
    <source>
        <strain>ATCC 13124 / DSM 756 / JCM 1290 / NCIMB 6125 / NCTC 8237 / S 107 / Type A</strain>
    </source>
</reference>
<name>LEXA_CLOP1</name>
<evidence type="ECO:0000255" key="1">
    <source>
        <dbReference type="HAMAP-Rule" id="MF_00015"/>
    </source>
</evidence>
<sequence length="203" mass="22922">MIIKENSDKQTQIYNFLIEFTKSKGYPPSVREICQAVSLKSTSTVHGHLKRLEKKGLIYRDPTKPRALEIVELSNEEKELIDIPIVGKVTAGMPILATENIEDMFQIPINYVKHNNDLFILKVTGDSMIEAGILDGDLAIIEQKNVATNGDIVVALIENEATIKRFFKENGFIRLQPENKNYEPIIVEDCSILGKLVGIYRAY</sequence>
<protein>
    <recommendedName>
        <fullName evidence="1">LexA repressor</fullName>
        <ecNumber evidence="1">3.4.21.88</ecNumber>
    </recommendedName>
</protein>
<dbReference type="EC" id="3.4.21.88" evidence="1"/>
<dbReference type="EMBL" id="CP000246">
    <property type="protein sequence ID" value="ABG85031.1"/>
    <property type="molecule type" value="Genomic_DNA"/>
</dbReference>
<dbReference type="SMR" id="Q0TRD0"/>
<dbReference type="STRING" id="195103.CPF_1364"/>
<dbReference type="MEROPS" id="S24.001"/>
<dbReference type="PaxDb" id="195103-CPF_1364"/>
<dbReference type="KEGG" id="cpf:CPF_1364"/>
<dbReference type="eggNOG" id="COG1974">
    <property type="taxonomic scope" value="Bacteria"/>
</dbReference>
<dbReference type="HOGENOM" id="CLU_066192_45_1_9"/>
<dbReference type="Proteomes" id="UP000001823">
    <property type="component" value="Chromosome"/>
</dbReference>
<dbReference type="GO" id="GO:0003677">
    <property type="term" value="F:DNA binding"/>
    <property type="evidence" value="ECO:0007669"/>
    <property type="project" value="UniProtKB-UniRule"/>
</dbReference>
<dbReference type="GO" id="GO:0004252">
    <property type="term" value="F:serine-type endopeptidase activity"/>
    <property type="evidence" value="ECO:0007669"/>
    <property type="project" value="UniProtKB-UniRule"/>
</dbReference>
<dbReference type="GO" id="GO:0006281">
    <property type="term" value="P:DNA repair"/>
    <property type="evidence" value="ECO:0007669"/>
    <property type="project" value="UniProtKB-UniRule"/>
</dbReference>
<dbReference type="GO" id="GO:0006260">
    <property type="term" value="P:DNA replication"/>
    <property type="evidence" value="ECO:0007669"/>
    <property type="project" value="UniProtKB-UniRule"/>
</dbReference>
<dbReference type="GO" id="GO:0045892">
    <property type="term" value="P:negative regulation of DNA-templated transcription"/>
    <property type="evidence" value="ECO:0007669"/>
    <property type="project" value="UniProtKB-UniRule"/>
</dbReference>
<dbReference type="GO" id="GO:0006508">
    <property type="term" value="P:proteolysis"/>
    <property type="evidence" value="ECO:0007669"/>
    <property type="project" value="InterPro"/>
</dbReference>
<dbReference type="GO" id="GO:0009432">
    <property type="term" value="P:SOS response"/>
    <property type="evidence" value="ECO:0007669"/>
    <property type="project" value="UniProtKB-UniRule"/>
</dbReference>
<dbReference type="CDD" id="cd00090">
    <property type="entry name" value="HTH_ARSR"/>
    <property type="match status" value="1"/>
</dbReference>
<dbReference type="CDD" id="cd06529">
    <property type="entry name" value="S24_LexA-like"/>
    <property type="match status" value="1"/>
</dbReference>
<dbReference type="FunFam" id="2.10.109.10:FF:000001">
    <property type="entry name" value="LexA repressor"/>
    <property type="match status" value="1"/>
</dbReference>
<dbReference type="Gene3D" id="2.10.109.10">
    <property type="entry name" value="Umud Fragment, subunit A"/>
    <property type="match status" value="1"/>
</dbReference>
<dbReference type="Gene3D" id="1.10.10.10">
    <property type="entry name" value="Winged helix-like DNA-binding domain superfamily/Winged helix DNA-binding domain"/>
    <property type="match status" value="1"/>
</dbReference>
<dbReference type="HAMAP" id="MF_00015">
    <property type="entry name" value="LexA"/>
    <property type="match status" value="1"/>
</dbReference>
<dbReference type="InterPro" id="IPR011991">
    <property type="entry name" value="ArsR-like_HTH"/>
</dbReference>
<dbReference type="InterPro" id="IPR006200">
    <property type="entry name" value="LexA"/>
</dbReference>
<dbReference type="InterPro" id="IPR039418">
    <property type="entry name" value="LexA-like"/>
</dbReference>
<dbReference type="InterPro" id="IPR036286">
    <property type="entry name" value="LexA/Signal_pep-like_sf"/>
</dbReference>
<dbReference type="InterPro" id="IPR006199">
    <property type="entry name" value="LexA_DNA-bd_dom"/>
</dbReference>
<dbReference type="InterPro" id="IPR050077">
    <property type="entry name" value="LexA_repressor"/>
</dbReference>
<dbReference type="InterPro" id="IPR006197">
    <property type="entry name" value="Peptidase_S24_LexA"/>
</dbReference>
<dbReference type="InterPro" id="IPR015927">
    <property type="entry name" value="Peptidase_S24_S26A/B/C"/>
</dbReference>
<dbReference type="InterPro" id="IPR036388">
    <property type="entry name" value="WH-like_DNA-bd_sf"/>
</dbReference>
<dbReference type="InterPro" id="IPR036390">
    <property type="entry name" value="WH_DNA-bd_sf"/>
</dbReference>
<dbReference type="NCBIfam" id="TIGR00498">
    <property type="entry name" value="lexA"/>
    <property type="match status" value="1"/>
</dbReference>
<dbReference type="PANTHER" id="PTHR33516">
    <property type="entry name" value="LEXA REPRESSOR"/>
    <property type="match status" value="1"/>
</dbReference>
<dbReference type="PANTHER" id="PTHR33516:SF2">
    <property type="entry name" value="LEXA REPRESSOR-RELATED"/>
    <property type="match status" value="1"/>
</dbReference>
<dbReference type="Pfam" id="PF01726">
    <property type="entry name" value="LexA_DNA_bind"/>
    <property type="match status" value="1"/>
</dbReference>
<dbReference type="Pfam" id="PF00717">
    <property type="entry name" value="Peptidase_S24"/>
    <property type="match status" value="1"/>
</dbReference>
<dbReference type="PRINTS" id="PR00726">
    <property type="entry name" value="LEXASERPTASE"/>
</dbReference>
<dbReference type="SUPFAM" id="SSF51306">
    <property type="entry name" value="LexA/Signal peptidase"/>
    <property type="match status" value="1"/>
</dbReference>
<dbReference type="SUPFAM" id="SSF46785">
    <property type="entry name" value="Winged helix' DNA-binding domain"/>
    <property type="match status" value="1"/>
</dbReference>
<gene>
    <name evidence="1" type="primary">lexA</name>
    <name type="ordered locus">CPF_1364</name>
</gene>
<accession>Q0TRD0</accession>
<proteinExistence type="inferred from homology"/>
<organism>
    <name type="scientific">Clostridium perfringens (strain ATCC 13124 / DSM 756 / JCM 1290 / NCIMB 6125 / NCTC 8237 / Type A)</name>
    <dbReference type="NCBI Taxonomy" id="195103"/>
    <lineage>
        <taxon>Bacteria</taxon>
        <taxon>Bacillati</taxon>
        <taxon>Bacillota</taxon>
        <taxon>Clostridia</taxon>
        <taxon>Eubacteriales</taxon>
        <taxon>Clostridiaceae</taxon>
        <taxon>Clostridium</taxon>
    </lineage>
</organism>
<comment type="function">
    <text evidence="1">Represses a number of genes involved in the response to DNA damage (SOS response), including recA and lexA. In the presence of single-stranded DNA, RecA interacts with LexA causing an autocatalytic cleavage which disrupts the DNA-binding part of LexA, leading to derepression of the SOS regulon and eventually DNA repair.</text>
</comment>
<comment type="catalytic activity">
    <reaction evidence="1">
        <text>Hydrolysis of Ala-|-Gly bond in repressor LexA.</text>
        <dbReference type="EC" id="3.4.21.88"/>
    </reaction>
</comment>
<comment type="subunit">
    <text evidence="1">Homodimer.</text>
</comment>
<comment type="similarity">
    <text evidence="1">Belongs to the peptidase S24 family.</text>
</comment>
<feature type="chain" id="PRO_1000001278" description="LexA repressor">
    <location>
        <begin position="1"/>
        <end position="203"/>
    </location>
</feature>
<feature type="DNA-binding region" description="H-T-H motif" evidence="1">
    <location>
        <begin position="30"/>
        <end position="50"/>
    </location>
</feature>
<feature type="active site" description="For autocatalytic cleavage activity" evidence="1">
    <location>
        <position position="127"/>
    </location>
</feature>
<feature type="active site" description="For autocatalytic cleavage activity" evidence="1">
    <location>
        <position position="164"/>
    </location>
</feature>
<feature type="site" description="Cleavage; by autolysis" evidence="1">
    <location>
        <begin position="91"/>
        <end position="92"/>
    </location>
</feature>